<evidence type="ECO:0000269" key="1">
    <source>
    </source>
</evidence>
<evidence type="ECO:0000269" key="2">
    <source>
    </source>
</evidence>
<evidence type="ECO:0000269" key="3">
    <source>
    </source>
</evidence>
<evidence type="ECO:0000269" key="4">
    <source>
    </source>
</evidence>
<evidence type="ECO:0000269" key="5">
    <source ref="6"/>
</evidence>
<evidence type="ECO:0000305" key="6"/>
<evidence type="ECO:0000305" key="7">
    <source>
    </source>
</evidence>
<evidence type="ECO:0007829" key="8">
    <source>
        <dbReference type="PDB" id="4RZ4"/>
    </source>
</evidence>
<gene>
    <name type="primary">fsaA</name>
    <name type="synonym">fsa</name>
    <name type="synonym">mipB</name>
    <name type="synonym">ybiZ</name>
    <name type="ordered locus">b0825</name>
    <name type="ordered locus">JW5109</name>
</gene>
<protein>
    <recommendedName>
        <fullName>Fructose-6-phosphate aldolase 1</fullName>
        <ecNumber>4.1.2.-</ecNumber>
    </recommendedName>
    <alternativeName>
        <fullName>Fructose-6-phosphate aldolase A</fullName>
        <shortName>FSAA</shortName>
    </alternativeName>
</protein>
<reference key="1">
    <citation type="submission" date="1996-10" db="EMBL/GenBank/DDBJ databases">
        <authorList>
            <person name="Isomura M."/>
            <person name="Ogino T."/>
            <person name="Mizuno T."/>
        </authorList>
    </citation>
    <scope>NUCLEOTIDE SEQUENCE [GENOMIC DNA]</scope>
    <source>
        <strain>K12 / MC4100 / ATCC 35695 / DSM 6574</strain>
    </source>
</reference>
<reference key="2">
    <citation type="journal article" date="1996" name="DNA Res.">
        <title>A 718-kb DNA sequence of the Escherichia coli K-12 genome corresponding to the 12.7-28.0 min region on the linkage map.</title>
        <authorList>
            <person name="Oshima T."/>
            <person name="Aiba H."/>
            <person name="Baba T."/>
            <person name="Fujita K."/>
            <person name="Hayashi K."/>
            <person name="Honjo A."/>
            <person name="Ikemoto K."/>
            <person name="Inada T."/>
            <person name="Itoh T."/>
            <person name="Kajihara M."/>
            <person name="Kanai K."/>
            <person name="Kashimoto K."/>
            <person name="Kimura S."/>
            <person name="Kitagawa M."/>
            <person name="Makino K."/>
            <person name="Masuda S."/>
            <person name="Miki T."/>
            <person name="Mizobuchi K."/>
            <person name="Mori H."/>
            <person name="Motomura K."/>
            <person name="Nakamura Y."/>
            <person name="Nashimoto H."/>
            <person name="Nishio Y."/>
            <person name="Saito N."/>
            <person name="Sampei G."/>
            <person name="Seki Y."/>
            <person name="Tagami H."/>
            <person name="Takemoto K."/>
            <person name="Wada C."/>
            <person name="Yamamoto Y."/>
            <person name="Yano M."/>
            <person name="Horiuchi T."/>
        </authorList>
    </citation>
    <scope>NUCLEOTIDE SEQUENCE [LARGE SCALE GENOMIC DNA]</scope>
    <source>
        <strain>K12 / W3110 / ATCC 27325 / DSM 5911</strain>
    </source>
</reference>
<reference key="3">
    <citation type="journal article" date="1997" name="Science">
        <title>The complete genome sequence of Escherichia coli K-12.</title>
        <authorList>
            <person name="Blattner F.R."/>
            <person name="Plunkett G. III"/>
            <person name="Bloch C.A."/>
            <person name="Perna N.T."/>
            <person name="Burland V."/>
            <person name="Riley M."/>
            <person name="Collado-Vides J."/>
            <person name="Glasner J.D."/>
            <person name="Rode C.K."/>
            <person name="Mayhew G.F."/>
            <person name="Gregor J."/>
            <person name="Davis N.W."/>
            <person name="Kirkpatrick H.A."/>
            <person name="Goeden M.A."/>
            <person name="Rose D.J."/>
            <person name="Mau B."/>
            <person name="Shao Y."/>
        </authorList>
    </citation>
    <scope>NUCLEOTIDE SEQUENCE [LARGE SCALE GENOMIC DNA]</scope>
    <source>
        <strain>K12 / MG1655 / ATCC 47076</strain>
    </source>
</reference>
<reference key="4">
    <citation type="journal article" date="2006" name="Mol. Syst. Biol.">
        <title>Highly accurate genome sequences of Escherichia coli K-12 strains MG1655 and W3110.</title>
        <authorList>
            <person name="Hayashi K."/>
            <person name="Morooka N."/>
            <person name="Yamamoto Y."/>
            <person name="Fujita K."/>
            <person name="Isono K."/>
            <person name="Choi S."/>
            <person name="Ohtsubo E."/>
            <person name="Baba T."/>
            <person name="Wanner B.L."/>
            <person name="Mori H."/>
            <person name="Horiuchi T."/>
        </authorList>
    </citation>
    <scope>NUCLEOTIDE SEQUENCE [LARGE SCALE GENOMIC DNA]</scope>
    <source>
        <strain>K12 / W3110 / ATCC 27325 / DSM 5911</strain>
    </source>
</reference>
<reference key="5">
    <citation type="journal article" date="2001" name="J. Biol. Chem.">
        <title>Fructose-6-phosphate aldolase is a novel class I aldolase from Escherichia coli and is related to a novel group of bacterial transaldolases.</title>
        <authorList>
            <person name="Schuermann M."/>
            <person name="Sprenger G.A."/>
        </authorList>
    </citation>
    <scope>PROTEIN SEQUENCE OF 1-10</scope>
    <scope>FUNCTION</scope>
    <scope>CATALYTIC ACTIVITY</scope>
    <scope>SUBSTRATE SPECIFICITY</scope>
    <scope>BIOPHYSICOCHEMICAL PROPERTIES</scope>
    <scope>ACTIVITY REGULATION</scope>
    <scope>MASS SPECTROMETRY</scope>
    <scope>SUBUNIT</scope>
    <scope>ACTIVE SITE</scope>
    <scope>MUTAGENESIS OF LYS-85</scope>
    <source>
        <strain>K12 / MC4100 / ATCC 35695 / DSM 6574</strain>
    </source>
</reference>
<reference key="6">
    <citation type="journal article" date="2002" name="J. Mol. Catal., B Enzym.">
        <title>Fructose-6-phosphate aldolase and 1-deoxy-D-xylulose 5-phosphate synthase from Escherichia coli as tools in enzymatic synthesis of 1-deoxysugars.</title>
        <authorList>
            <person name="Schuermann M."/>
            <person name="Schuermann M."/>
            <person name="Sprenger G.A."/>
        </authorList>
    </citation>
    <scope>FUNCTION</scope>
    <scope>CATALYTIC ACTIVITY</scope>
    <scope>SUBSTRATE SPECIFICITY</scope>
    <scope>BIOTECHNOLOGY</scope>
    <source>
        <strain>K12 / MC4100 / ATCC 35695 / DSM 6574</strain>
    </source>
</reference>
<reference key="7">
    <citation type="journal article" date="2007" name="J. Am. Chem. Soc.">
        <title>D-Fructose-6-phosphate aldolase-catalyzed one-pot synthesis of iminocyclitols.</title>
        <authorList>
            <person name="Sugiyama M."/>
            <person name="Hong Z."/>
            <person name="Liang P.H."/>
            <person name="Dean S.M."/>
            <person name="Whalen L.J."/>
            <person name="Greenberg W.A."/>
            <person name="Wong C.H."/>
        </authorList>
    </citation>
    <scope>FUNCTION</scope>
    <scope>CATALYTIC ACTIVITY</scope>
    <scope>SUBSTRATE SPECIFICITY</scope>
    <scope>KINETIC PARAMETERS</scope>
    <scope>BIOTECHNOLOGY</scope>
    <source>
        <strain>K12 / W3110 / ATCC 27325 / DSM 5911</strain>
    </source>
</reference>
<reference key="8">
    <citation type="journal article" date="2009" name="Angew. Chem. Int. Ed.">
        <title>Asymmetric self- and cross-aldol reactions of glycolaldehyde catalyzed by D-fructose-6-phosphate aldolase.</title>
        <authorList>
            <person name="Garrabou X."/>
            <person name="Castillo J.A."/>
            <person name="Guerard-Helaine C."/>
            <person name="Parella T."/>
            <person name="Joglar J."/>
            <person name="Lemaire M."/>
            <person name="Clapes P."/>
        </authorList>
    </citation>
    <scope>FUNCTION</scope>
    <scope>CATALYTIC ACTIVITY</scope>
    <scope>SUBSTRATE SPECIFICITY</scope>
    <scope>KINETIC PARAMETERS</scope>
    <scope>BIOTECHNOLOGY</scope>
</reference>
<reference key="9">
    <citation type="journal article" date="2002" name="J. Mol. Biol.">
        <title>Crystal structure of decameric fructose-6-phosphate aldolase from Escherichia coli reveals inter-subunit helix swapping as a structural basis for assembly differences in the transaldolase family.</title>
        <authorList>
            <person name="Thorell S."/>
            <person name="Schurmann M."/>
            <person name="Sprenger G.A."/>
            <person name="Schneider G."/>
        </authorList>
    </citation>
    <scope>X-RAY CRYSTALLOGRAPHY (1.93 ANGSTROMS)</scope>
    <scope>ACTIVE SITE</scope>
    <scope>SUBUNIT</scope>
    <source>
        <strain>K12 / MC4100 / ATCC 35695 / DSM 6574</strain>
    </source>
</reference>
<comment type="function">
    <text evidence="1 3 4 5">Catalyzes the reversible formation of fructose 6-phosphate from dihydroxyacetone (DHA) and D-glyceraldehyde 3-phosphate via an aldolization reaction. Can utilize several aldehydes as acceptor compounds in vitro, and hydroxyacetone (HA) or 1-hydroxy-butan-2-one as alternative donor substrate. Is also able to catalyze the direct stereoselective self-aldol addition of glycolaldehyde to furnish D-(-)-threose, and cross-aldol reactions of glycolaldehyde to other aldehyde acceptors. Is not able to cleave fructose, fructose 1-phosphate, glucose 6-phosphate, sedoheptulose 1,7-bisphosphate, xylulose 5-phosphate, ribulose 5-phosphate, and fructose 1,6-bisphosphate; cannot use dihydroxyacetone phosphate as donor compound nor D-glyceraldehyde as acceptor. Does not display transaldolase activity.</text>
</comment>
<comment type="catalytic activity">
    <reaction evidence="1 3 4 5">
        <text>beta-D-fructose 6-phosphate = dihydroxyacetone + D-glyceraldehyde 3-phosphate</text>
        <dbReference type="Rhea" id="RHEA:28002"/>
        <dbReference type="ChEBI" id="CHEBI:16016"/>
        <dbReference type="ChEBI" id="CHEBI:57634"/>
        <dbReference type="ChEBI" id="CHEBI:59776"/>
    </reaction>
</comment>
<comment type="activity regulation">
    <text evidence="1">Inhibited by glycerol, inorganic phosphate and arabinose 5-phosphate.</text>
</comment>
<comment type="biophysicochemical properties">
    <kinetics>
        <KM evidence="1">9 mM for D-fructose 6-phosphate (at 30 degrees Celsius and pH 8.5)</KM>
        <KM evidence="1">35 mM for dihydroxyacetone (at 30 degrees Celsius and pH 8.5)</KM>
        <KM evidence="1">0.8 mM for glyceraldehyde 3-phosphate (at 30 degrees Celsius and pH 8.5)</KM>
        <KM evidence="3">40 mM for dihydroxyacetone (at 25 degrees Celsius and pH 8.5)</KM>
        <KM evidence="3">11 mM for hydroxyacetone (at 25 degrees Celsius and pH 8.5)</KM>
        <KM evidence="3">32 mM for 1-hydroxy-butan-2-one (at 25 degrees Celsius and pH 8.5)</KM>
        <KM evidence="4">32 mM for dihydroxyacetone</KM>
        <KM evidence="4">17.4 mM for hydroxyacetone</KM>
        <KM evidence="4">0.197 mM for glycolaldehyde (as donor substrate in the self-aldol addition of glycolaldehyde)</KM>
        <KM evidence="4">62.8 mM for glycolaldehyde (as acceptor substrate in the self-aldol addition of glycolaldehyde)</KM>
        <KM evidence="4">0.286 mM for D-threose</KM>
        <KM evidence="4">0.561 mM for D-arabinose-5-P</KM>
        <Vmax evidence="1">45.0 umol/min/mg enzyme for the aldolization reaction leading to D-fructose 6-phosphate (at 30 degrees Celsius and pH 8.5)</Vmax>
        <Vmax evidence="1">7.0 umol/min/mg enzyme for D-fructose 6-phosphate cleavage (at 30 degrees Celsius and pH 8.5)</Vmax>
        <Vmax evidence="4">1.46 umol/min/mg enzyme for the aldol reaction with DHA and D,L-glyceraldehyde 3-phosphate as substrates</Vmax>
        <Vmax evidence="4">33.7 umol/min/mg enzyme for the aldol reaction with HA and D,L-glyceraldehyde 3-phosphate as substrates</Vmax>
        <Vmax evidence="4">0.22 umol/min/mg enzyme for the self-aldol addition of glycolaldehyde</Vmax>
        <Vmax evidence="4">0.34 umol/min/mg enzyme for D-fructose 6-phosphate cleavage</Vmax>
        <Vmax evidence="4">0.16 umol/min/mg enzyme for D-arabinose-5-P cleavage</Vmax>
        <text evidence="3">kcat is 1.31 sec(-1), 0.82 sec(-1) and 0.63 sec(-1) using glyceraldehyde 3-phosphate as acceptor substrate, and dihydroxyacetone, hydroxyacetone or 1-hydroxy-butan-2-one as donor substrate, respectively (at 25 degrees Celsius and pH 8.5).</text>
    </kinetics>
    <phDependence>
        <text evidence="1">Optimum pH is about 8.5. Active from pH 6 to 12.</text>
    </phDependence>
    <temperatureDependence>
        <text evidence="1">Displays a broad temperature optimum and is active in the range from 20 to 75 degrees Celsius. Although no significant loss of activity is detected after 600 hours of incubation at 45 degrees Celsius (at pH 8.0), the respective half-lives of the enzyme are 200 hours at 55 degrees Celsius, 30 hours at 65 degrees Celsius, and 16 hours at 75 degrees Celsius.</text>
    </temperatureDependence>
</comment>
<comment type="subunit">
    <text evidence="1 2">Homodecamer. Five subunits are arranged as a pentamer, and two ring-like pentamers pack like a donut to form the decamer.</text>
</comment>
<comment type="subcellular location">
    <subcellularLocation>
        <location>Cytoplasm</location>
    </subcellularLocation>
</comment>
<comment type="mass spectrometry" mass="22998.0" method="Electrospray" evidence="1"/>
<comment type="biotechnology">
    <text evidence="3 4 5">Is an interesting tool in chemoenzymatic synthesis for the construction of chiral complex polyhydroxylated sugar-type structures. The use of hydroxyacetone (acetol) as a donor compound allows access to various 1-deoxysugars. Can also be used for the synthesis of a broad range of iminocyclitols, that are potent glycosidase and glycosyltransferase inhibitors, from dihydroxyacetone, hydroxyacetone or 1-hydroxy-butan-2-one as donor substrate, and a range of acceptor substrates.</text>
</comment>
<comment type="miscellaneous">
    <text evidence="7">Is not inhibited by EDTA which points to a metal-independent mode of action.</text>
</comment>
<comment type="similarity">
    <text evidence="6">Belongs to the transaldolase family. Type 3A subfamily.</text>
</comment>
<organism>
    <name type="scientific">Escherichia coli (strain K12)</name>
    <dbReference type="NCBI Taxonomy" id="83333"/>
    <lineage>
        <taxon>Bacteria</taxon>
        <taxon>Pseudomonadati</taxon>
        <taxon>Pseudomonadota</taxon>
        <taxon>Gammaproteobacteria</taxon>
        <taxon>Enterobacterales</taxon>
        <taxon>Enterobacteriaceae</taxon>
        <taxon>Escherichia</taxon>
    </lineage>
</organism>
<keyword id="KW-0002">3D-structure</keyword>
<keyword id="KW-0119">Carbohydrate metabolism</keyword>
<keyword id="KW-0963">Cytoplasm</keyword>
<keyword id="KW-0903">Direct protein sequencing</keyword>
<keyword id="KW-0456">Lyase</keyword>
<keyword id="KW-1185">Reference proteome</keyword>
<keyword id="KW-0704">Schiff base</keyword>
<feature type="chain" id="PRO_0000173643" description="Fructose-6-phosphate aldolase 1">
    <location>
        <begin position="1"/>
        <end position="220"/>
    </location>
</feature>
<feature type="active site" description="Schiff-base intermediate with substrate" evidence="1 2">
    <location>
        <position position="85"/>
    </location>
</feature>
<feature type="mutagenesis site" description="Loss of activity." evidence="1">
    <original>K</original>
    <variation>R</variation>
    <location>
        <position position="85"/>
    </location>
</feature>
<feature type="strand" evidence="8">
    <location>
        <begin position="2"/>
        <end position="6"/>
    </location>
</feature>
<feature type="helix" evidence="8">
    <location>
        <begin position="10"/>
        <end position="17"/>
    </location>
</feature>
<feature type="strand" evidence="8">
    <location>
        <begin position="24"/>
        <end position="26"/>
    </location>
</feature>
<feature type="helix" evidence="8">
    <location>
        <begin position="29"/>
        <end position="35"/>
    </location>
</feature>
<feature type="helix" evidence="8">
    <location>
        <begin position="39"/>
        <end position="49"/>
    </location>
</feature>
<feature type="turn" evidence="8">
    <location>
        <begin position="50"/>
        <end position="52"/>
    </location>
</feature>
<feature type="strand" evidence="8">
    <location>
        <begin position="54"/>
        <end position="59"/>
    </location>
</feature>
<feature type="helix" evidence="8">
    <location>
        <begin position="65"/>
        <end position="78"/>
    </location>
</feature>
<feature type="strand" evidence="8">
    <location>
        <begin position="83"/>
        <end position="87"/>
    </location>
</feature>
<feature type="helix" evidence="8">
    <location>
        <begin position="90"/>
        <end position="101"/>
    </location>
</feature>
<feature type="strand" evidence="8">
    <location>
        <begin position="106"/>
        <end position="111"/>
    </location>
</feature>
<feature type="helix" evidence="8">
    <location>
        <begin position="114"/>
        <end position="123"/>
    </location>
</feature>
<feature type="strand" evidence="8">
    <location>
        <begin position="126"/>
        <end position="131"/>
    </location>
</feature>
<feature type="helix" evidence="8">
    <location>
        <begin position="132"/>
        <end position="137"/>
    </location>
</feature>
<feature type="helix" evidence="8">
    <location>
        <begin position="142"/>
        <end position="156"/>
    </location>
</feature>
<feature type="strand" evidence="8">
    <location>
        <begin position="161"/>
        <end position="165"/>
    </location>
</feature>
<feature type="helix" evidence="8">
    <location>
        <begin position="170"/>
        <end position="178"/>
    </location>
</feature>
<feature type="strand" evidence="8">
    <location>
        <begin position="182"/>
        <end position="186"/>
    </location>
</feature>
<feature type="helix" evidence="8">
    <location>
        <begin position="188"/>
        <end position="193"/>
    </location>
</feature>
<feature type="helix" evidence="8">
    <location>
        <begin position="198"/>
        <end position="215"/>
    </location>
</feature>
<feature type="strand" evidence="8">
    <location>
        <begin position="216"/>
        <end position="218"/>
    </location>
</feature>
<accession>P78055</accession>
<accession>P77855</accession>
<accession>Q9R3X3</accession>
<sequence length="220" mass="22997">MELYLDTSDVVAVKALSRIFPLAGVTTNPSIIAAGKKPLDVVLPQLHEAMGGQGRLFAQVMATTAEGMVNDALKLRSIIADIVVKVPVTAEGLAAIKMLKAEGIPTLGTAVYGAAQGLLSALAGAEYVAPYVNRIDAQGGSGIQTVTDLHQLLKMHAPQAKVLAASFKTPRQALDCLLAGCESITLPLDVAQQMISYPAVDAAVAKFEQDWQGAFGRTSI</sequence>
<dbReference type="EC" id="4.1.2.-"/>
<dbReference type="EMBL" id="D88188">
    <property type="protein sequence ID" value="BAA13552.1"/>
    <property type="molecule type" value="Genomic_DNA"/>
</dbReference>
<dbReference type="EMBL" id="U00096">
    <property type="protein sequence ID" value="AAC73912.2"/>
    <property type="molecule type" value="Genomic_DNA"/>
</dbReference>
<dbReference type="EMBL" id="AP009048">
    <property type="protein sequence ID" value="BAA35513.2"/>
    <property type="molecule type" value="Genomic_DNA"/>
</dbReference>
<dbReference type="PIR" id="A64820">
    <property type="entry name" value="A64820"/>
</dbReference>
<dbReference type="RefSeq" id="NP_415346.4">
    <property type="nucleotide sequence ID" value="NC_000913.3"/>
</dbReference>
<dbReference type="RefSeq" id="WP_001336208.1">
    <property type="nucleotide sequence ID" value="NZ_SSZK01000002.1"/>
</dbReference>
<dbReference type="PDB" id="1L6W">
    <property type="method" value="X-ray"/>
    <property type="resolution" value="1.93 A"/>
    <property type="chains" value="A/B/C/D/E/F/G/H/I/J=1-220"/>
</dbReference>
<dbReference type="PDB" id="4RXF">
    <property type="method" value="X-ray"/>
    <property type="resolution" value="2.40 A"/>
    <property type="chains" value="A/B/C/D/E/F/G/H/I/J=2-220"/>
</dbReference>
<dbReference type="PDB" id="4RXG">
    <property type="method" value="X-ray"/>
    <property type="resolution" value="2.15 A"/>
    <property type="chains" value="A/B/C/D/E/F/G/H/I/J=1-220"/>
</dbReference>
<dbReference type="PDB" id="4RZ4">
    <property type="method" value="X-ray"/>
    <property type="resolution" value="1.75 A"/>
    <property type="chains" value="A/B/C/D/E/F/G/H/I/J=2-220"/>
</dbReference>
<dbReference type="PDB" id="4S1F">
    <property type="method" value="X-ray"/>
    <property type="resolution" value="2.24 A"/>
    <property type="chains" value="A/B/C/D/E/F/G/H/I/J/K/L/M/N/O/P/Q/R/S/T=2-220"/>
</dbReference>
<dbReference type="PDB" id="5ZOL">
    <property type="method" value="X-ray"/>
    <property type="resolution" value="2.17 A"/>
    <property type="chains" value="A/B/C/D/E/F/G/H/I/J=1-220"/>
</dbReference>
<dbReference type="PDB" id="7QXF">
    <property type="method" value="X-ray"/>
    <property type="resolution" value="2.62 A"/>
    <property type="chains" value="A/B/C/D/E/F/G/H/I/J/K/L/M/N/O=1-220"/>
</dbReference>
<dbReference type="PDB" id="8S7H">
    <property type="method" value="EM"/>
    <property type="resolution" value="2.80 A"/>
    <property type="chains" value="A/B/C/D/E/F/G/H/I/J=1-220"/>
</dbReference>
<dbReference type="PDB" id="8S7I">
    <property type="method" value="EM"/>
    <property type="resolution" value="3.20 A"/>
    <property type="chains" value="A/B/C/D/E/F/G/H/I/J=1-220"/>
</dbReference>
<dbReference type="PDBsum" id="1L6W"/>
<dbReference type="PDBsum" id="4RXF"/>
<dbReference type="PDBsum" id="4RXG"/>
<dbReference type="PDBsum" id="4RZ4"/>
<dbReference type="PDBsum" id="4S1F"/>
<dbReference type="PDBsum" id="5ZOL"/>
<dbReference type="PDBsum" id="7QXF"/>
<dbReference type="PDBsum" id="8S7H"/>
<dbReference type="PDBsum" id="8S7I"/>
<dbReference type="EMDB" id="EMD-19772"/>
<dbReference type="EMDB" id="EMD-19773"/>
<dbReference type="SMR" id="P78055"/>
<dbReference type="BioGRID" id="4263503">
    <property type="interactions" value="5"/>
</dbReference>
<dbReference type="DIP" id="DIP-10218N"/>
<dbReference type="FunCoup" id="P78055">
    <property type="interactions" value="239"/>
</dbReference>
<dbReference type="IntAct" id="P78055">
    <property type="interactions" value="1"/>
</dbReference>
<dbReference type="STRING" id="511145.b0825"/>
<dbReference type="jPOST" id="P78055"/>
<dbReference type="PaxDb" id="511145-b0825"/>
<dbReference type="EnsemblBacteria" id="AAC73912">
    <property type="protein sequence ID" value="AAC73912"/>
    <property type="gene ID" value="b0825"/>
</dbReference>
<dbReference type="GeneID" id="945449"/>
<dbReference type="KEGG" id="ecj:JW5109"/>
<dbReference type="KEGG" id="eco:b0825"/>
<dbReference type="KEGG" id="ecoc:C3026_05180"/>
<dbReference type="PATRIC" id="fig|1411691.4.peg.1453"/>
<dbReference type="EchoBASE" id="EB3244"/>
<dbReference type="eggNOG" id="COG0176">
    <property type="taxonomic scope" value="Bacteria"/>
</dbReference>
<dbReference type="HOGENOM" id="CLU_079764_2_0_6"/>
<dbReference type="InParanoid" id="P78055"/>
<dbReference type="OMA" id="VRHPMHV"/>
<dbReference type="OrthoDB" id="9807051at2"/>
<dbReference type="PhylomeDB" id="P78055"/>
<dbReference type="BioCyc" id="EcoCyc:G6428-MONOMER"/>
<dbReference type="BioCyc" id="MetaCyc:G6428-MONOMER"/>
<dbReference type="SABIO-RK" id="P78055"/>
<dbReference type="EvolutionaryTrace" id="P78055"/>
<dbReference type="PRO" id="PR:P78055"/>
<dbReference type="Proteomes" id="UP000000625">
    <property type="component" value="Chromosome"/>
</dbReference>
<dbReference type="GO" id="GO:0005737">
    <property type="term" value="C:cytoplasm"/>
    <property type="evidence" value="ECO:0007669"/>
    <property type="project" value="UniProtKB-SubCell"/>
</dbReference>
<dbReference type="GO" id="GO:0097023">
    <property type="term" value="F:fructose 6-phosphate aldolase activity"/>
    <property type="evidence" value="ECO:0000314"/>
    <property type="project" value="EcoCyc"/>
</dbReference>
<dbReference type="GO" id="GO:0042802">
    <property type="term" value="F:identical protein binding"/>
    <property type="evidence" value="ECO:0000314"/>
    <property type="project" value="EcoCyc"/>
</dbReference>
<dbReference type="GO" id="GO:0006000">
    <property type="term" value="P:fructose metabolic process"/>
    <property type="evidence" value="ECO:0007669"/>
    <property type="project" value="UniProtKB-UniRule"/>
</dbReference>
<dbReference type="GO" id="GO:0042182">
    <property type="term" value="P:ketone catabolic process"/>
    <property type="evidence" value="ECO:0000315"/>
    <property type="project" value="EcoCyc"/>
</dbReference>
<dbReference type="CDD" id="cd00956">
    <property type="entry name" value="Transaldolase_FSA"/>
    <property type="match status" value="1"/>
</dbReference>
<dbReference type="FunFam" id="3.20.20.70:FF:000018">
    <property type="entry name" value="Probable transaldolase"/>
    <property type="match status" value="1"/>
</dbReference>
<dbReference type="Gene3D" id="3.20.20.70">
    <property type="entry name" value="Aldolase class I"/>
    <property type="match status" value="1"/>
</dbReference>
<dbReference type="HAMAP" id="MF_00496">
    <property type="entry name" value="F6P_aldolase"/>
    <property type="match status" value="1"/>
</dbReference>
<dbReference type="InterPro" id="IPR013785">
    <property type="entry name" value="Aldolase_TIM"/>
</dbReference>
<dbReference type="InterPro" id="IPR023001">
    <property type="entry name" value="F6P_aldolase"/>
</dbReference>
<dbReference type="InterPro" id="IPR001585">
    <property type="entry name" value="TAL/FSA"/>
</dbReference>
<dbReference type="InterPro" id="IPR004731">
    <property type="entry name" value="Transaldolase_3B/F6P_aldolase"/>
</dbReference>
<dbReference type="InterPro" id="IPR018225">
    <property type="entry name" value="Transaldolase_AS"/>
</dbReference>
<dbReference type="InterPro" id="IPR033919">
    <property type="entry name" value="TSA/FSA_arc/bac"/>
</dbReference>
<dbReference type="NCBIfam" id="TIGR00875">
    <property type="entry name" value="fsa_talC_mipB"/>
    <property type="match status" value="1"/>
</dbReference>
<dbReference type="NCBIfam" id="NF009296">
    <property type="entry name" value="PRK12653.1"/>
    <property type="match status" value="1"/>
</dbReference>
<dbReference type="PANTHER" id="PTHR10683:SF40">
    <property type="entry name" value="FRUCTOSE-6-PHOSPHATE ALDOLASE 1-RELATED"/>
    <property type="match status" value="1"/>
</dbReference>
<dbReference type="PANTHER" id="PTHR10683">
    <property type="entry name" value="TRANSALDOLASE"/>
    <property type="match status" value="1"/>
</dbReference>
<dbReference type="Pfam" id="PF00923">
    <property type="entry name" value="TAL_FSA"/>
    <property type="match status" value="1"/>
</dbReference>
<dbReference type="SUPFAM" id="SSF51569">
    <property type="entry name" value="Aldolase"/>
    <property type="match status" value="1"/>
</dbReference>
<dbReference type="PROSITE" id="PS01054">
    <property type="entry name" value="TRANSALDOLASE_1"/>
    <property type="match status" value="1"/>
</dbReference>
<dbReference type="PROSITE" id="PS00958">
    <property type="entry name" value="TRANSALDOLASE_2"/>
    <property type="match status" value="1"/>
</dbReference>
<proteinExistence type="evidence at protein level"/>
<name>FSAA_ECOLI</name>